<reference key="1">
    <citation type="journal article" date="1995" name="Cancer Lett.">
        <title>Human calgizzarin; one colorectal cancer-related gene selected by a large scale random cDNA sequencing and northern blot analysis.</title>
        <authorList>
            <person name="Tanaka M."/>
            <person name="Adzuma K."/>
            <person name="Iwami M."/>
            <person name="Yoshimoto K."/>
            <person name="Monden Y."/>
            <person name="Itakura M."/>
        </authorList>
    </citation>
    <scope>NUCLEOTIDE SEQUENCE [MRNA]</scope>
</reference>
<reference key="2">
    <citation type="journal article" date="1995" name="Genomics">
        <title>Identification of four novel human genes amplified and overexpressed in breast carcinoma and localized to the q11-q21.3 region of chromosome 17.</title>
        <authorList>
            <person name="Tomasetto C.L."/>
            <person name="Regnier C.H."/>
            <person name="Moog-Lutz C."/>
            <person name="Mattei M.-G."/>
            <person name="Chenard M.-P."/>
            <person name="Lidereau R."/>
            <person name="Basset P."/>
            <person name="Rio M.-C."/>
        </authorList>
    </citation>
    <scope>NUCLEOTIDE SEQUENCE [MRNA]</scope>
    <source>
        <tissue>Mammary carcinoma</tissue>
    </source>
</reference>
<reference key="3">
    <citation type="submission" date="1995-10" db="EMBL/GenBank/DDBJ databases">
        <title>Isolation and characterization of cDNA for human S100C protein and a related gene.</title>
        <authorList>
            <person name="Nakatani K."/>
            <person name="Kato A."/>
            <person name="Sugimoto M."/>
            <person name="Kumano K."/>
            <person name="Komada T."/>
            <person name="Tsunoda H."/>
            <person name="Ito M."/>
            <person name="Nakano T."/>
            <person name="Shima T."/>
            <person name="Tanaka T."/>
        </authorList>
    </citation>
    <scope>NUCLEOTIDE SEQUENCE [MRNA]</scope>
    <source>
        <tissue>Lung</tissue>
    </source>
</reference>
<reference key="4">
    <citation type="submission" date="1997-11" db="EMBL/GenBank/DDBJ databases">
        <title>Molecular cloning of a human homologue of the two calcium binding protein, porcine S100 and rabbit calgizzarin.</title>
        <authorList>
            <person name="Fujiwara T."/>
            <person name="Kawai A."/>
            <person name="Shimizu F."/>
            <person name="Shinomiya K."/>
            <person name="Hirano H."/>
            <person name="Okuno S."/>
            <person name="Ozaki K."/>
            <person name="Katagiri T."/>
            <person name="Takeda S."/>
            <person name="Kuga Y."/>
            <person name="Shimada Y."/>
            <person name="Nagata M."/>
            <person name="Takaichi A."/>
            <person name="Watanabe T."/>
            <person name="Horie M."/>
            <person name="Nakamura Y."/>
            <person name="Takahashi E."/>
            <person name="Hirai Y."/>
        </authorList>
    </citation>
    <scope>NUCLEOTIDE SEQUENCE [MRNA]</scope>
    <source>
        <tissue>Brain</tissue>
    </source>
</reference>
<reference key="5">
    <citation type="submission" date="2003-08" db="EMBL/GenBank/DDBJ databases">
        <title>Cloning of human full-length CDSs in BD Creator(TM) system donor vector.</title>
        <authorList>
            <person name="Kalnine N."/>
            <person name="Chen X."/>
            <person name="Rolfs A."/>
            <person name="Halleck A."/>
            <person name="Hines L."/>
            <person name="Eisenstein S."/>
            <person name="Koundinya M."/>
            <person name="Raphael J."/>
            <person name="Moreira D."/>
            <person name="Kelley T."/>
            <person name="LaBaer J."/>
            <person name="Lin Y."/>
            <person name="Phelan M."/>
            <person name="Farmer A."/>
        </authorList>
    </citation>
    <scope>NUCLEOTIDE SEQUENCE [LARGE SCALE MRNA]</scope>
</reference>
<reference key="6">
    <citation type="journal article" date="2006" name="Nature">
        <title>The DNA sequence and biological annotation of human chromosome 1.</title>
        <authorList>
            <person name="Gregory S.G."/>
            <person name="Barlow K.F."/>
            <person name="McLay K.E."/>
            <person name="Kaul R."/>
            <person name="Swarbreck D."/>
            <person name="Dunham A."/>
            <person name="Scott C.E."/>
            <person name="Howe K.L."/>
            <person name="Woodfine K."/>
            <person name="Spencer C.C.A."/>
            <person name="Jones M.C."/>
            <person name="Gillson C."/>
            <person name="Searle S."/>
            <person name="Zhou Y."/>
            <person name="Kokocinski F."/>
            <person name="McDonald L."/>
            <person name="Evans R."/>
            <person name="Phillips K."/>
            <person name="Atkinson A."/>
            <person name="Cooper R."/>
            <person name="Jones C."/>
            <person name="Hall R.E."/>
            <person name="Andrews T.D."/>
            <person name="Lloyd C."/>
            <person name="Ainscough R."/>
            <person name="Almeida J.P."/>
            <person name="Ambrose K.D."/>
            <person name="Anderson F."/>
            <person name="Andrew R.W."/>
            <person name="Ashwell R.I.S."/>
            <person name="Aubin K."/>
            <person name="Babbage A.K."/>
            <person name="Bagguley C.L."/>
            <person name="Bailey J."/>
            <person name="Beasley H."/>
            <person name="Bethel G."/>
            <person name="Bird C.P."/>
            <person name="Bray-Allen S."/>
            <person name="Brown J.Y."/>
            <person name="Brown A.J."/>
            <person name="Buckley D."/>
            <person name="Burton J."/>
            <person name="Bye J."/>
            <person name="Carder C."/>
            <person name="Chapman J.C."/>
            <person name="Clark S.Y."/>
            <person name="Clarke G."/>
            <person name="Clee C."/>
            <person name="Cobley V."/>
            <person name="Collier R.E."/>
            <person name="Corby N."/>
            <person name="Coville G.J."/>
            <person name="Davies J."/>
            <person name="Deadman R."/>
            <person name="Dunn M."/>
            <person name="Earthrowl M."/>
            <person name="Ellington A.G."/>
            <person name="Errington H."/>
            <person name="Frankish A."/>
            <person name="Frankland J."/>
            <person name="French L."/>
            <person name="Garner P."/>
            <person name="Garnett J."/>
            <person name="Gay L."/>
            <person name="Ghori M.R.J."/>
            <person name="Gibson R."/>
            <person name="Gilby L.M."/>
            <person name="Gillett W."/>
            <person name="Glithero R.J."/>
            <person name="Grafham D.V."/>
            <person name="Griffiths C."/>
            <person name="Griffiths-Jones S."/>
            <person name="Grocock R."/>
            <person name="Hammond S."/>
            <person name="Harrison E.S.I."/>
            <person name="Hart E."/>
            <person name="Haugen E."/>
            <person name="Heath P.D."/>
            <person name="Holmes S."/>
            <person name="Holt K."/>
            <person name="Howden P.J."/>
            <person name="Hunt A.R."/>
            <person name="Hunt S.E."/>
            <person name="Hunter G."/>
            <person name="Isherwood J."/>
            <person name="James R."/>
            <person name="Johnson C."/>
            <person name="Johnson D."/>
            <person name="Joy A."/>
            <person name="Kay M."/>
            <person name="Kershaw J.K."/>
            <person name="Kibukawa M."/>
            <person name="Kimberley A.M."/>
            <person name="King A."/>
            <person name="Knights A.J."/>
            <person name="Lad H."/>
            <person name="Laird G."/>
            <person name="Lawlor S."/>
            <person name="Leongamornlert D.A."/>
            <person name="Lloyd D.M."/>
            <person name="Loveland J."/>
            <person name="Lovell J."/>
            <person name="Lush M.J."/>
            <person name="Lyne R."/>
            <person name="Martin S."/>
            <person name="Mashreghi-Mohammadi M."/>
            <person name="Matthews L."/>
            <person name="Matthews N.S.W."/>
            <person name="McLaren S."/>
            <person name="Milne S."/>
            <person name="Mistry S."/>
            <person name="Moore M.J.F."/>
            <person name="Nickerson T."/>
            <person name="O'Dell C.N."/>
            <person name="Oliver K."/>
            <person name="Palmeiri A."/>
            <person name="Palmer S.A."/>
            <person name="Parker A."/>
            <person name="Patel D."/>
            <person name="Pearce A.V."/>
            <person name="Peck A.I."/>
            <person name="Pelan S."/>
            <person name="Phelps K."/>
            <person name="Phillimore B.J."/>
            <person name="Plumb R."/>
            <person name="Rajan J."/>
            <person name="Raymond C."/>
            <person name="Rouse G."/>
            <person name="Saenphimmachak C."/>
            <person name="Sehra H.K."/>
            <person name="Sheridan E."/>
            <person name="Shownkeen R."/>
            <person name="Sims S."/>
            <person name="Skuce C.D."/>
            <person name="Smith M."/>
            <person name="Steward C."/>
            <person name="Subramanian S."/>
            <person name="Sycamore N."/>
            <person name="Tracey A."/>
            <person name="Tromans A."/>
            <person name="Van Helmond Z."/>
            <person name="Wall M."/>
            <person name="Wallis J.M."/>
            <person name="White S."/>
            <person name="Whitehead S.L."/>
            <person name="Wilkinson J.E."/>
            <person name="Willey D.L."/>
            <person name="Williams H."/>
            <person name="Wilming L."/>
            <person name="Wray P.W."/>
            <person name="Wu Z."/>
            <person name="Coulson A."/>
            <person name="Vaudin M."/>
            <person name="Sulston J.E."/>
            <person name="Durbin R.M."/>
            <person name="Hubbard T."/>
            <person name="Wooster R."/>
            <person name="Dunham I."/>
            <person name="Carter N.P."/>
            <person name="McVean G."/>
            <person name="Ross M.T."/>
            <person name="Harrow J."/>
            <person name="Olson M.V."/>
            <person name="Beck S."/>
            <person name="Rogers J."/>
            <person name="Bentley D.R."/>
        </authorList>
    </citation>
    <scope>NUCLEOTIDE SEQUENCE [LARGE SCALE GENOMIC DNA]</scope>
</reference>
<reference key="7">
    <citation type="journal article" date="2004" name="Genome Res.">
        <title>The status, quality, and expansion of the NIH full-length cDNA project: the Mammalian Gene Collection (MGC).</title>
        <authorList>
            <consortium name="The MGC Project Team"/>
        </authorList>
    </citation>
    <scope>NUCLEOTIDE SEQUENCE [LARGE SCALE MRNA]</scope>
    <source>
        <tissue>Placenta</tissue>
        <tissue>Urinary bladder</tissue>
    </source>
</reference>
<reference key="8">
    <citation type="journal article" date="1992" name="Electrophoresis">
        <title>Microsequences of 145 proteins recorded in the two-dimensional gel protein database of normal human epidermal keratinocytes.</title>
        <authorList>
            <person name="Rasmussen H.H."/>
            <person name="van Damme J."/>
            <person name="Puype M."/>
            <person name="Gesser B."/>
            <person name="Celis J.E."/>
            <person name="Vandekerckhove J."/>
        </authorList>
    </citation>
    <scope>PROTEIN SEQUENCE OF 4-12; 43-51 AND 56-62</scope>
    <source>
        <tissue>Keratinocyte</tissue>
    </source>
</reference>
<reference key="9">
    <citation type="journal article" date="2008" name="Proc. Natl. Acad. Sci. U.S.A.">
        <title>A quantitative atlas of mitotic phosphorylation.</title>
        <authorList>
            <person name="Dephoure N."/>
            <person name="Zhou C."/>
            <person name="Villen J."/>
            <person name="Beausoleil S.A."/>
            <person name="Bakalarski C.E."/>
            <person name="Elledge S.J."/>
            <person name="Gygi S.P."/>
        </authorList>
    </citation>
    <scope>PHOSPHORYLATION [LARGE SCALE ANALYSIS] AT SER-6</scope>
    <scope>IDENTIFICATION BY MASS SPECTROMETRY [LARGE SCALE ANALYSIS]</scope>
    <source>
        <tissue>Cervix carcinoma</tissue>
    </source>
</reference>
<reference key="10">
    <citation type="journal article" date="2009" name="Science">
        <title>Lysine acetylation targets protein complexes and co-regulates major cellular functions.</title>
        <authorList>
            <person name="Choudhary C."/>
            <person name="Kumar C."/>
            <person name="Gnad F."/>
            <person name="Nielsen M.L."/>
            <person name="Rehman M."/>
            <person name="Walther T.C."/>
            <person name="Olsen J.V."/>
            <person name="Mann M."/>
        </authorList>
    </citation>
    <scope>ACETYLATION [LARGE SCALE ANALYSIS] AT LYS-3</scope>
    <scope>IDENTIFICATION BY MASS SPECTROMETRY [LARGE SCALE ANALYSIS]</scope>
</reference>
<reference key="11">
    <citation type="journal article" date="2010" name="Sci. Signal.">
        <title>Quantitative phosphoproteomics reveals widespread full phosphorylation site occupancy during mitosis.</title>
        <authorList>
            <person name="Olsen J.V."/>
            <person name="Vermeulen M."/>
            <person name="Santamaria A."/>
            <person name="Kumar C."/>
            <person name="Miller M.L."/>
            <person name="Jensen L.J."/>
            <person name="Gnad F."/>
            <person name="Cox J."/>
            <person name="Jensen T.S."/>
            <person name="Nigg E.A."/>
            <person name="Brunak S."/>
            <person name="Mann M."/>
        </authorList>
    </citation>
    <scope>PHOSPHORYLATION [LARGE SCALE ANALYSIS] AT SER-6</scope>
    <scope>IDENTIFICATION BY MASS SPECTROMETRY [LARGE SCALE ANALYSIS]</scope>
    <source>
        <tissue>Cervix carcinoma</tissue>
    </source>
</reference>
<reference key="12">
    <citation type="journal article" date="2011" name="BMC Syst. Biol.">
        <title>Initial characterization of the human central proteome.</title>
        <authorList>
            <person name="Burkard T.R."/>
            <person name="Planyavsky M."/>
            <person name="Kaupe I."/>
            <person name="Breitwieser F.P."/>
            <person name="Buerckstuemmer T."/>
            <person name="Bennett K.L."/>
            <person name="Superti-Furga G."/>
            <person name="Colinge J."/>
        </authorList>
    </citation>
    <scope>IDENTIFICATION BY MASS SPECTROMETRY [LARGE SCALE ANALYSIS]</scope>
</reference>
<reference key="13">
    <citation type="journal article" date="2012" name="Proc. Natl. Acad. Sci. U.S.A.">
        <title>N-terminal acetylome analyses and functional insights of the N-terminal acetyltransferase NatB.</title>
        <authorList>
            <person name="Van Damme P."/>
            <person name="Lasa M."/>
            <person name="Polevoda B."/>
            <person name="Gazquez C."/>
            <person name="Elosegui-Artola A."/>
            <person name="Kim D.S."/>
            <person name="De Juan-Pardo E."/>
            <person name="Demeyer K."/>
            <person name="Hole K."/>
            <person name="Larrea E."/>
            <person name="Timmerman E."/>
            <person name="Prieto J."/>
            <person name="Arnesen T."/>
            <person name="Sherman F."/>
            <person name="Gevaert K."/>
            <person name="Aldabe R."/>
        </authorList>
    </citation>
    <scope>ACETYLATION [LARGE SCALE ANALYSIS] AT MET-1 AND ALA-2</scope>
    <scope>CLEAVAGE OF INITIATOR METHIONINE [LARGE SCALE ANALYSIS]</scope>
    <scope>IDENTIFICATION BY MASS SPECTROMETRY [LARGE SCALE ANALYSIS]</scope>
</reference>
<reference key="14">
    <citation type="journal article" date="2013" name="J. Proteome Res.">
        <title>Toward a comprehensive characterization of a human cancer cell phosphoproteome.</title>
        <authorList>
            <person name="Zhou H."/>
            <person name="Di Palma S."/>
            <person name="Preisinger C."/>
            <person name="Peng M."/>
            <person name="Polat A.N."/>
            <person name="Heck A.J."/>
            <person name="Mohammed S."/>
        </authorList>
    </citation>
    <scope>PHOSPHORYLATION [LARGE SCALE ANALYSIS] AT SER-5 AND SER-6</scope>
    <scope>IDENTIFICATION BY MASS SPECTROMETRY [LARGE SCALE ANALYSIS]</scope>
    <source>
        <tissue>Cervix carcinoma</tissue>
    </source>
</reference>
<reference key="15">
    <citation type="journal article" date="2014" name="J. Proteomics">
        <title>An enzyme assisted RP-RPLC approach for in-depth analysis of human liver phosphoproteome.</title>
        <authorList>
            <person name="Bian Y."/>
            <person name="Song C."/>
            <person name="Cheng K."/>
            <person name="Dong M."/>
            <person name="Wang F."/>
            <person name="Huang J."/>
            <person name="Sun D."/>
            <person name="Wang L."/>
            <person name="Ye M."/>
            <person name="Zou H."/>
        </authorList>
    </citation>
    <scope>PHOSPHORYLATION [LARGE SCALE ANALYSIS] AT SER-6</scope>
    <scope>IDENTIFICATION BY MASS SPECTROMETRY [LARGE SCALE ANALYSIS]</scope>
    <source>
        <tissue>Liver</tissue>
    </source>
</reference>
<reference key="16">
    <citation type="journal article" date="2015" name="Proteomics">
        <title>N-terminome analysis of the human mitochondrial proteome.</title>
        <authorList>
            <person name="Vaca Jacome A.S."/>
            <person name="Rabilloud T."/>
            <person name="Schaeffer-Reiss C."/>
            <person name="Rompais M."/>
            <person name="Ayoub D."/>
            <person name="Lane L."/>
            <person name="Bairoch A."/>
            <person name="Van Dorsselaer A."/>
            <person name="Carapito C."/>
        </authorList>
    </citation>
    <scope>IDENTIFICATION BY MASS SPECTROMETRY [LARGE SCALE ANALYSIS]</scope>
</reference>
<reference key="17">
    <citation type="journal article" date="2008" name="J. Pept. Sci.">
        <title>The structure of S100A11 fragment explains a local structural change induced by phosphorylation.</title>
        <authorList>
            <person name="Kouno T."/>
            <person name="Mizuguchi M."/>
            <person name="Sakaguchi M."/>
            <person name="Makino E."/>
            <person name="Mori Y."/>
            <person name="Shinoda H."/>
            <person name="Aizawa T."/>
            <person name="Demura M."/>
            <person name="Huh N.H."/>
            <person name="Kawano K."/>
        </authorList>
    </citation>
    <scope>STRUCTURE BY NMR OF 1-19</scope>
    <scope>DISULFIDE BOND</scope>
    <scope>PHOSPHORYLATION AT THR-10</scope>
    <scope>FUNCTION</scope>
    <scope>SUBCELLULAR LOCATION</scope>
</reference>
<proteinExistence type="evidence at protein level"/>
<accession>P31949</accession>
<accession>Q5VTK0</accession>
<comment type="function">
    <text evidence="4">Facilitates the differentiation and the cornification of keratinocytes.</text>
</comment>
<comment type="subunit">
    <text evidence="4">Homodimer; disulfide-linked.</text>
</comment>
<comment type="interaction">
    <interactant intactId="EBI-701862">
        <id>P31949</id>
    </interactant>
    <interactant intactId="EBI-741158">
        <id>Q96HA8</id>
        <label>NTAQ1</label>
    </interactant>
    <organismsDiffer>false</organismsDiffer>
    <experiments>3</experiments>
</comment>
<comment type="interaction">
    <interactant intactId="EBI-701862">
        <id>P31949</id>
    </interactant>
    <interactant intactId="EBI-458391">
        <id>P04271</id>
        <label>S100B</label>
    </interactant>
    <organismsDiffer>false</organismsDiffer>
    <experiments>5</experiments>
</comment>
<comment type="interaction">
    <interactant intactId="EBI-701862">
        <id>P31949</id>
    </interactant>
    <interactant intactId="EBI-359977">
        <id>P01375</id>
        <label>TNF</label>
    </interactant>
    <organismsDiffer>false</organismsDiffer>
    <experiments>4</experiments>
</comment>
<comment type="interaction">
    <interactant intactId="EBI-701862">
        <id>P31949</id>
    </interactant>
    <interactant intactId="EBI-366083">
        <id>P04637</id>
        <label>TP53</label>
    </interactant>
    <organismsDiffer>false</organismsDiffer>
    <experiments>2</experiments>
</comment>
<comment type="interaction">
    <interactant intactId="EBI-701862">
        <id>P31949</id>
    </interactant>
    <interactant intactId="EBI-11723041">
        <id>Q8TD43</id>
        <label>TRPM4</label>
    </interactant>
    <organismsDiffer>false</organismsDiffer>
    <experiments>2</experiments>
</comment>
<comment type="subcellular location">
    <subcellularLocation>
        <location evidence="4">Cytoplasm</location>
    </subcellularLocation>
    <subcellularLocation>
        <location evidence="4">Nucleus</location>
    </subcellularLocation>
</comment>
<comment type="PTM">
    <text evidence="4">Phosphorylation at Thr-10 by PRKCA significantly suppresses homodimerization and promotes association with NCL/nucleolin which induces nuclear translocation.</text>
</comment>
<comment type="miscellaneous">
    <text evidence="1">Binds two calcium ions per molecule with an affinity similar to that of the S-100 proteins.</text>
</comment>
<comment type="similarity">
    <text evidence="5">Belongs to the S-100 family.</text>
</comment>
<dbReference type="EMBL" id="D38583">
    <property type="protein sequence ID" value="BAA07597.1"/>
    <property type="molecule type" value="mRNA"/>
</dbReference>
<dbReference type="EMBL" id="X80201">
    <property type="protein sequence ID" value="CAA56492.1"/>
    <property type="molecule type" value="mRNA"/>
</dbReference>
<dbReference type="EMBL" id="D49355">
    <property type="protein sequence ID" value="BAA08354.1"/>
    <property type="molecule type" value="mRNA"/>
</dbReference>
<dbReference type="EMBL" id="D50374">
    <property type="protein sequence ID" value="BAA23325.1"/>
    <property type="molecule type" value="mRNA"/>
</dbReference>
<dbReference type="EMBL" id="BT009912">
    <property type="protein sequence ID" value="AAP88914.1"/>
    <property type="molecule type" value="mRNA"/>
</dbReference>
<dbReference type="EMBL" id="AL591893">
    <property type="status" value="NOT_ANNOTATED_CDS"/>
    <property type="molecule type" value="Genomic_DNA"/>
</dbReference>
<dbReference type="EMBL" id="BC001410">
    <property type="protein sequence ID" value="AAH01410.1"/>
    <property type="molecule type" value="mRNA"/>
</dbReference>
<dbReference type="EMBL" id="BC014354">
    <property type="protein sequence ID" value="AAH14354.1"/>
    <property type="molecule type" value="mRNA"/>
</dbReference>
<dbReference type="CCDS" id="CCDS1009.1"/>
<dbReference type="PIR" id="I37080">
    <property type="entry name" value="I37080"/>
</dbReference>
<dbReference type="RefSeq" id="NP_005611.1">
    <property type="nucleotide sequence ID" value="NM_005620.2"/>
</dbReference>
<dbReference type="PDB" id="1V4Z">
    <property type="method" value="NMR"/>
    <property type="chains" value="A=1-19"/>
</dbReference>
<dbReference type="PDB" id="1V50">
    <property type="method" value="NMR"/>
    <property type="chains" value="A=1-19"/>
</dbReference>
<dbReference type="PDB" id="2LUC">
    <property type="method" value="NMR"/>
    <property type="chains" value="A/B=1-105"/>
</dbReference>
<dbReference type="PDBsum" id="1V4Z"/>
<dbReference type="PDBsum" id="1V50"/>
<dbReference type="PDBsum" id="2LUC"/>
<dbReference type="BMRB" id="P31949"/>
<dbReference type="SMR" id="P31949"/>
<dbReference type="BioGRID" id="112190">
    <property type="interactions" value="77"/>
</dbReference>
<dbReference type="FunCoup" id="P31949">
    <property type="interactions" value="419"/>
</dbReference>
<dbReference type="IntAct" id="P31949">
    <property type="interactions" value="29"/>
</dbReference>
<dbReference type="MINT" id="P31949"/>
<dbReference type="STRING" id="9606.ENSP00000271638"/>
<dbReference type="DrugBank" id="DB02482">
    <property type="generic name" value="Phosphonothreonine"/>
</dbReference>
<dbReference type="GlyGen" id="P31949">
    <property type="glycosylation" value="1 site, 1 O-linked glycan (1 site)"/>
</dbReference>
<dbReference type="iPTMnet" id="P31949"/>
<dbReference type="MetOSite" id="P31949"/>
<dbReference type="PhosphoSitePlus" id="P31949"/>
<dbReference type="SwissPalm" id="P31949"/>
<dbReference type="BioMuta" id="S100A11"/>
<dbReference type="DMDM" id="1710818"/>
<dbReference type="jPOST" id="P31949"/>
<dbReference type="MassIVE" id="P31949"/>
<dbReference type="PaxDb" id="9606-ENSP00000271638"/>
<dbReference type="PeptideAtlas" id="P31949"/>
<dbReference type="PRIDE" id="P31949"/>
<dbReference type="ProteomicsDB" id="54821"/>
<dbReference type="Pumba" id="P31949"/>
<dbReference type="TopDownProteomics" id="P31949"/>
<dbReference type="Antibodypedia" id="20339">
    <property type="antibodies" value="457 antibodies from 35 providers"/>
</dbReference>
<dbReference type="DNASU" id="6282"/>
<dbReference type="Ensembl" id="ENST00000271638.3">
    <property type="protein sequence ID" value="ENSP00000271638.2"/>
    <property type="gene ID" value="ENSG00000163191.6"/>
</dbReference>
<dbReference type="GeneID" id="6282"/>
<dbReference type="KEGG" id="hsa:6282"/>
<dbReference type="MANE-Select" id="ENST00000271638.3">
    <property type="protein sequence ID" value="ENSP00000271638.2"/>
    <property type="RefSeq nucleotide sequence ID" value="NM_005620.2"/>
    <property type="RefSeq protein sequence ID" value="NP_005611.1"/>
</dbReference>
<dbReference type="AGR" id="HGNC:10488"/>
<dbReference type="CTD" id="6282"/>
<dbReference type="DisGeNET" id="6282"/>
<dbReference type="GeneCards" id="S100A11"/>
<dbReference type="HGNC" id="HGNC:10488">
    <property type="gene designation" value="S100A11"/>
</dbReference>
<dbReference type="HPA" id="ENSG00000163191">
    <property type="expression patterns" value="Tissue enhanced (esophagus)"/>
</dbReference>
<dbReference type="MIM" id="603114">
    <property type="type" value="gene"/>
</dbReference>
<dbReference type="neXtProt" id="NX_P31949"/>
<dbReference type="OpenTargets" id="ENSG00000163191"/>
<dbReference type="PharmGKB" id="PA34900"/>
<dbReference type="VEuPathDB" id="HostDB:ENSG00000163191"/>
<dbReference type="eggNOG" id="ENOG502SS6H">
    <property type="taxonomic scope" value="Eukaryota"/>
</dbReference>
<dbReference type="GeneTree" id="ENSGT00940000154172"/>
<dbReference type="HOGENOM" id="CLU_138624_1_0_1"/>
<dbReference type="InParanoid" id="P31949"/>
<dbReference type="OMA" id="MACEKCY"/>
<dbReference type="OrthoDB" id="9451669at2759"/>
<dbReference type="PAN-GO" id="P31949">
    <property type="GO annotations" value="5 GO annotations based on evolutionary models"/>
</dbReference>
<dbReference type="PhylomeDB" id="P31949"/>
<dbReference type="TreeFam" id="TF332727"/>
<dbReference type="PathwayCommons" id="P31949"/>
<dbReference type="Reactome" id="R-HSA-6798695">
    <property type="pathway name" value="Neutrophil degranulation"/>
</dbReference>
<dbReference type="SignaLink" id="P31949"/>
<dbReference type="BioGRID-ORCS" id="6282">
    <property type="hits" value="28 hits in 1119 CRISPR screens"/>
</dbReference>
<dbReference type="CD-CODE" id="91857CE7">
    <property type="entry name" value="Nucleolus"/>
</dbReference>
<dbReference type="ChiTaRS" id="S100A11">
    <property type="organism name" value="human"/>
</dbReference>
<dbReference type="EvolutionaryTrace" id="P31949"/>
<dbReference type="GeneWiki" id="S100A11"/>
<dbReference type="GenomeRNAi" id="6282"/>
<dbReference type="Pharos" id="P31949">
    <property type="development level" value="Tbio"/>
</dbReference>
<dbReference type="PRO" id="PR:P31949"/>
<dbReference type="Proteomes" id="UP000005640">
    <property type="component" value="Chromosome 1"/>
</dbReference>
<dbReference type="RNAct" id="P31949">
    <property type="molecule type" value="protein"/>
</dbReference>
<dbReference type="Bgee" id="ENSG00000163191">
    <property type="expression patterns" value="Expressed in lower esophagus mucosa and 208 other cell types or tissues"/>
</dbReference>
<dbReference type="ExpressionAtlas" id="P31949">
    <property type="expression patterns" value="baseline and differential"/>
</dbReference>
<dbReference type="GO" id="GO:0005912">
    <property type="term" value="C:adherens junction"/>
    <property type="evidence" value="ECO:0007005"/>
    <property type="project" value="BHF-UCL"/>
</dbReference>
<dbReference type="GO" id="GO:0005737">
    <property type="term" value="C:cytoplasm"/>
    <property type="evidence" value="ECO:0000314"/>
    <property type="project" value="UniProtKB"/>
</dbReference>
<dbReference type="GO" id="GO:0070062">
    <property type="term" value="C:extracellular exosome"/>
    <property type="evidence" value="ECO:0007005"/>
    <property type="project" value="UniProtKB"/>
</dbReference>
<dbReference type="GO" id="GO:0005576">
    <property type="term" value="C:extracellular region"/>
    <property type="evidence" value="ECO:0007005"/>
    <property type="project" value="BHF-UCL"/>
</dbReference>
<dbReference type="GO" id="GO:0005615">
    <property type="term" value="C:extracellular space"/>
    <property type="evidence" value="ECO:0007005"/>
    <property type="project" value="UniProtKB"/>
</dbReference>
<dbReference type="GO" id="GO:0005634">
    <property type="term" value="C:nucleus"/>
    <property type="evidence" value="ECO:0000314"/>
    <property type="project" value="UniProtKB"/>
</dbReference>
<dbReference type="GO" id="GO:0001726">
    <property type="term" value="C:ruffle"/>
    <property type="evidence" value="ECO:0000314"/>
    <property type="project" value="UniProtKB"/>
</dbReference>
<dbReference type="GO" id="GO:0034774">
    <property type="term" value="C:secretory granule lumen"/>
    <property type="evidence" value="ECO:0000304"/>
    <property type="project" value="Reactome"/>
</dbReference>
<dbReference type="GO" id="GO:0098641">
    <property type="term" value="F:cadherin binding involved in cell-cell adhesion"/>
    <property type="evidence" value="ECO:0007005"/>
    <property type="project" value="BHF-UCL"/>
</dbReference>
<dbReference type="GO" id="GO:0005509">
    <property type="term" value="F:calcium ion binding"/>
    <property type="evidence" value="ECO:0000318"/>
    <property type="project" value="GO_Central"/>
</dbReference>
<dbReference type="GO" id="GO:0048306">
    <property type="term" value="F:calcium-dependent protein binding"/>
    <property type="evidence" value="ECO:0000314"/>
    <property type="project" value="UniProtKB"/>
</dbReference>
<dbReference type="GO" id="GO:0042803">
    <property type="term" value="F:protein homodimerization activity"/>
    <property type="evidence" value="ECO:0000314"/>
    <property type="project" value="UniProtKB"/>
</dbReference>
<dbReference type="GO" id="GO:0044548">
    <property type="term" value="F:S100 protein binding"/>
    <property type="evidence" value="ECO:0000353"/>
    <property type="project" value="UniProtKB"/>
</dbReference>
<dbReference type="GO" id="GO:0008285">
    <property type="term" value="P:negative regulation of cell population proliferation"/>
    <property type="evidence" value="ECO:0000304"/>
    <property type="project" value="ProtInc"/>
</dbReference>
<dbReference type="GO" id="GO:0008156">
    <property type="term" value="P:negative regulation of DNA replication"/>
    <property type="evidence" value="ECO:0000304"/>
    <property type="project" value="ProtInc"/>
</dbReference>
<dbReference type="GO" id="GO:0014911">
    <property type="term" value="P:positive regulation of smooth muscle cell migration"/>
    <property type="evidence" value="ECO:0000315"/>
    <property type="project" value="CACAO"/>
</dbReference>
<dbReference type="GO" id="GO:0007165">
    <property type="term" value="P:signal transduction"/>
    <property type="evidence" value="ECO:0000304"/>
    <property type="project" value="UniProtKB"/>
</dbReference>
<dbReference type="CDD" id="cd05023">
    <property type="entry name" value="S-100A11"/>
    <property type="match status" value="1"/>
</dbReference>
<dbReference type="FunFam" id="1.10.238.10:FF:000188">
    <property type="entry name" value="Protein S100"/>
    <property type="match status" value="1"/>
</dbReference>
<dbReference type="Gene3D" id="1.10.238.10">
    <property type="entry name" value="EF-hand"/>
    <property type="match status" value="1"/>
</dbReference>
<dbReference type="InterPro" id="IPR011992">
    <property type="entry name" value="EF-hand-dom_pair"/>
</dbReference>
<dbReference type="InterPro" id="IPR018247">
    <property type="entry name" value="EF_Hand_1_Ca_BS"/>
</dbReference>
<dbReference type="InterPro" id="IPR002048">
    <property type="entry name" value="EF_hand_dom"/>
</dbReference>
<dbReference type="InterPro" id="IPR001751">
    <property type="entry name" value="S100/CaBP7/8-like_CS"/>
</dbReference>
<dbReference type="InterPro" id="IPR013787">
    <property type="entry name" value="S100_Ca-bd_sub"/>
</dbReference>
<dbReference type="InterPro" id="IPR028482">
    <property type="entry name" value="S100A11"/>
</dbReference>
<dbReference type="PANTHER" id="PTHR11639:SF60">
    <property type="entry name" value="PROTEIN S100-A11"/>
    <property type="match status" value="1"/>
</dbReference>
<dbReference type="PANTHER" id="PTHR11639">
    <property type="entry name" value="S100 CALCIUM-BINDING PROTEIN"/>
    <property type="match status" value="1"/>
</dbReference>
<dbReference type="Pfam" id="PF00036">
    <property type="entry name" value="EF-hand_1"/>
    <property type="match status" value="1"/>
</dbReference>
<dbReference type="Pfam" id="PF01023">
    <property type="entry name" value="S_100"/>
    <property type="match status" value="1"/>
</dbReference>
<dbReference type="SMART" id="SM00054">
    <property type="entry name" value="EFh"/>
    <property type="match status" value="1"/>
</dbReference>
<dbReference type="SMART" id="SM01394">
    <property type="entry name" value="S_100"/>
    <property type="match status" value="1"/>
</dbReference>
<dbReference type="SUPFAM" id="SSF47473">
    <property type="entry name" value="EF-hand"/>
    <property type="match status" value="1"/>
</dbReference>
<dbReference type="PROSITE" id="PS00018">
    <property type="entry name" value="EF_HAND_1"/>
    <property type="match status" value="1"/>
</dbReference>
<dbReference type="PROSITE" id="PS50222">
    <property type="entry name" value="EF_HAND_2"/>
    <property type="match status" value="1"/>
</dbReference>
<dbReference type="PROSITE" id="PS00303">
    <property type="entry name" value="S100_CABP"/>
    <property type="match status" value="1"/>
</dbReference>
<gene>
    <name type="primary">S100A11</name>
    <name type="synonym">MLN70</name>
    <name type="synonym">S100C</name>
</gene>
<protein>
    <recommendedName>
        <fullName>Protein S100-A11</fullName>
    </recommendedName>
    <alternativeName>
        <fullName>Calgizzarin</fullName>
    </alternativeName>
    <alternativeName>
        <fullName>Metastatic lymph node gene 70 protein</fullName>
        <shortName>MLN 70</shortName>
    </alternativeName>
    <alternativeName>
        <fullName>Protein S100-C</fullName>
    </alternativeName>
    <alternativeName>
        <fullName>S100 calcium-binding protein A11</fullName>
    </alternativeName>
    <component>
        <recommendedName>
            <fullName>Protein S100-A11, N-terminally processed</fullName>
        </recommendedName>
    </component>
</protein>
<name>S10AB_HUMAN</name>
<sequence length="105" mass="11740">MAKISSPTETERCIESLIAVFQKYAGKDGYNYTLSKTEFLSFMNTELAAFTKNQKDPGVLDRMMKKLDTNSDGQLDFSEFLNLIGGLAMACHDSFLKAVPSQKRT</sequence>
<feature type="chain" id="PRO_0000424465" description="Protein S100-A11">
    <location>
        <begin position="1"/>
        <end position="105"/>
    </location>
</feature>
<feature type="initiator methionine" description="Removed; alternate" evidence="9">
    <location>
        <position position="1"/>
    </location>
</feature>
<feature type="chain" id="PRO_0000144009" description="Protein S100-A11, N-terminally processed">
    <location>
        <begin position="2"/>
        <end position="105"/>
    </location>
</feature>
<feature type="domain" description="EF-hand 1" evidence="5">
    <location>
        <begin position="13"/>
        <end position="49"/>
    </location>
</feature>
<feature type="domain" description="EF-hand 2" evidence="3">
    <location>
        <begin position="55"/>
        <end position="90"/>
    </location>
</feature>
<feature type="binding site" evidence="5">
    <location>
        <position position="33"/>
    </location>
    <ligand>
        <name>Ca(2+)</name>
        <dbReference type="ChEBI" id="CHEBI:29108"/>
        <label>1</label>
        <note>low affinity</note>
    </ligand>
</feature>
<feature type="binding site" evidence="5">
    <location>
        <position position="38"/>
    </location>
    <ligand>
        <name>Ca(2+)</name>
        <dbReference type="ChEBI" id="CHEBI:29108"/>
        <label>1</label>
        <note>low affinity</note>
    </ligand>
</feature>
<feature type="binding site" evidence="3">
    <location>
        <position position="68"/>
    </location>
    <ligand>
        <name>Ca(2+)</name>
        <dbReference type="ChEBI" id="CHEBI:29108"/>
        <label>2</label>
        <note>high affinity</note>
    </ligand>
</feature>
<feature type="binding site" evidence="3">
    <location>
        <position position="70"/>
    </location>
    <ligand>
        <name>Ca(2+)</name>
        <dbReference type="ChEBI" id="CHEBI:29108"/>
        <label>2</label>
        <note>high affinity</note>
    </ligand>
</feature>
<feature type="binding site" evidence="3">
    <location>
        <position position="72"/>
    </location>
    <ligand>
        <name>Ca(2+)</name>
        <dbReference type="ChEBI" id="CHEBI:29108"/>
        <label>2</label>
        <note>high affinity</note>
    </ligand>
</feature>
<feature type="binding site" evidence="3">
    <location>
        <position position="74"/>
    </location>
    <ligand>
        <name>Ca(2+)</name>
        <dbReference type="ChEBI" id="CHEBI:29108"/>
        <label>2</label>
        <note>high affinity</note>
    </ligand>
</feature>
<feature type="binding site" evidence="3">
    <location>
        <position position="79"/>
    </location>
    <ligand>
        <name>Ca(2+)</name>
        <dbReference type="ChEBI" id="CHEBI:29108"/>
        <label>2</label>
        <note>high affinity</note>
    </ligand>
</feature>
<feature type="modified residue" description="N-acetylmethionine" evidence="9">
    <location>
        <position position="1"/>
    </location>
</feature>
<feature type="modified residue" description="N-acetylalanine; in Protein S100-A11, N-terminally processed" evidence="9">
    <location>
        <position position="2"/>
    </location>
</feature>
<feature type="modified residue" description="N6-acetyllysine" evidence="7">
    <location>
        <position position="3"/>
    </location>
</feature>
<feature type="modified residue" description="Phosphoserine" evidence="10">
    <location>
        <position position="5"/>
    </location>
</feature>
<feature type="modified residue" description="Phosphoserine" evidence="6 8 10 11">
    <location>
        <position position="6"/>
    </location>
</feature>
<feature type="modified residue" description="Phosphothreonine" evidence="4">
    <location>
        <position position="10"/>
    </location>
</feature>
<feature type="modified residue" description="N6-acetyllysine" evidence="2">
    <location>
        <position position="27"/>
    </location>
</feature>
<feature type="disulfide bond" description="Interchain" evidence="4">
    <location>
        <position position="13"/>
    </location>
</feature>
<feature type="helix" evidence="12">
    <location>
        <begin position="7"/>
        <end position="18"/>
    </location>
</feature>
<feature type="strand" evidence="13">
    <location>
        <begin position="30"/>
        <end position="32"/>
    </location>
</feature>
<feature type="helix" evidence="13">
    <location>
        <begin position="36"/>
        <end position="45"/>
    </location>
</feature>
<feature type="helix" evidence="13">
    <location>
        <begin position="48"/>
        <end position="54"/>
    </location>
</feature>
<feature type="helix" evidence="13">
    <location>
        <begin position="58"/>
        <end position="67"/>
    </location>
</feature>
<feature type="strand" evidence="13">
    <location>
        <begin position="70"/>
        <end position="75"/>
    </location>
</feature>
<feature type="helix" evidence="13">
    <location>
        <begin position="77"/>
        <end position="96"/>
    </location>
</feature>
<evidence type="ECO:0000250" key="1"/>
<evidence type="ECO:0000250" key="2">
    <source>
        <dbReference type="UniProtKB" id="P50543"/>
    </source>
</evidence>
<evidence type="ECO:0000255" key="3">
    <source>
        <dbReference type="PROSITE-ProRule" id="PRU00448"/>
    </source>
</evidence>
<evidence type="ECO:0000269" key="4">
    <source>
    </source>
</evidence>
<evidence type="ECO:0000305" key="5"/>
<evidence type="ECO:0007744" key="6">
    <source>
    </source>
</evidence>
<evidence type="ECO:0007744" key="7">
    <source>
    </source>
</evidence>
<evidence type="ECO:0007744" key="8">
    <source>
    </source>
</evidence>
<evidence type="ECO:0007744" key="9">
    <source>
    </source>
</evidence>
<evidence type="ECO:0007744" key="10">
    <source>
    </source>
</evidence>
<evidence type="ECO:0007744" key="11">
    <source>
    </source>
</evidence>
<evidence type="ECO:0007829" key="12">
    <source>
        <dbReference type="PDB" id="1V4Z"/>
    </source>
</evidence>
<evidence type="ECO:0007829" key="13">
    <source>
        <dbReference type="PDB" id="2LUC"/>
    </source>
</evidence>
<organism>
    <name type="scientific">Homo sapiens</name>
    <name type="common">Human</name>
    <dbReference type="NCBI Taxonomy" id="9606"/>
    <lineage>
        <taxon>Eukaryota</taxon>
        <taxon>Metazoa</taxon>
        <taxon>Chordata</taxon>
        <taxon>Craniata</taxon>
        <taxon>Vertebrata</taxon>
        <taxon>Euteleostomi</taxon>
        <taxon>Mammalia</taxon>
        <taxon>Eutheria</taxon>
        <taxon>Euarchontoglires</taxon>
        <taxon>Primates</taxon>
        <taxon>Haplorrhini</taxon>
        <taxon>Catarrhini</taxon>
        <taxon>Hominidae</taxon>
        <taxon>Homo</taxon>
    </lineage>
</organism>
<keyword id="KW-0002">3D-structure</keyword>
<keyword id="KW-0007">Acetylation</keyword>
<keyword id="KW-0106">Calcium</keyword>
<keyword id="KW-0963">Cytoplasm</keyword>
<keyword id="KW-0903">Direct protein sequencing</keyword>
<keyword id="KW-1015">Disulfide bond</keyword>
<keyword id="KW-0479">Metal-binding</keyword>
<keyword id="KW-0539">Nucleus</keyword>
<keyword id="KW-0597">Phosphoprotein</keyword>
<keyword id="KW-1267">Proteomics identification</keyword>
<keyword id="KW-1185">Reference proteome</keyword>
<keyword id="KW-0677">Repeat</keyword>